<reference key="1">
    <citation type="submission" date="2008-06" db="EMBL/GenBank/DDBJ databases">
        <title>Complete sequence of Pelodictyon phaeoclathratiforme BU-1.</title>
        <authorList>
            <consortium name="US DOE Joint Genome Institute"/>
            <person name="Lucas S."/>
            <person name="Copeland A."/>
            <person name="Lapidus A."/>
            <person name="Glavina del Rio T."/>
            <person name="Dalin E."/>
            <person name="Tice H."/>
            <person name="Bruce D."/>
            <person name="Goodwin L."/>
            <person name="Pitluck S."/>
            <person name="Schmutz J."/>
            <person name="Larimer F."/>
            <person name="Land M."/>
            <person name="Hauser L."/>
            <person name="Kyrpides N."/>
            <person name="Mikhailova N."/>
            <person name="Liu Z."/>
            <person name="Li T."/>
            <person name="Zhao F."/>
            <person name="Overmann J."/>
            <person name="Bryant D.A."/>
            <person name="Richardson P."/>
        </authorList>
    </citation>
    <scope>NUCLEOTIDE SEQUENCE [LARGE SCALE GENOMIC DNA]</scope>
    <source>
        <strain>DSM 5477 / BU-1</strain>
    </source>
</reference>
<feature type="chain" id="PRO_1000130700" description="UPF0235 protein Ppha_2415">
    <location>
        <begin position="1"/>
        <end position="97"/>
    </location>
</feature>
<dbReference type="EMBL" id="CP001110">
    <property type="protein sequence ID" value="ACF44603.1"/>
    <property type="molecule type" value="Genomic_DNA"/>
</dbReference>
<dbReference type="RefSeq" id="WP_012509077.1">
    <property type="nucleotide sequence ID" value="NC_011060.1"/>
</dbReference>
<dbReference type="SMR" id="B4SES7"/>
<dbReference type="STRING" id="324925.Ppha_2415"/>
<dbReference type="KEGG" id="pph:Ppha_2415"/>
<dbReference type="eggNOG" id="COG1872">
    <property type="taxonomic scope" value="Bacteria"/>
</dbReference>
<dbReference type="HOGENOM" id="CLU_130694_6_0_10"/>
<dbReference type="OrthoDB" id="9800587at2"/>
<dbReference type="Proteomes" id="UP000002724">
    <property type="component" value="Chromosome"/>
</dbReference>
<dbReference type="GO" id="GO:0005737">
    <property type="term" value="C:cytoplasm"/>
    <property type="evidence" value="ECO:0007669"/>
    <property type="project" value="TreeGrafter"/>
</dbReference>
<dbReference type="Gene3D" id="3.30.1200.10">
    <property type="entry name" value="YggU-like"/>
    <property type="match status" value="1"/>
</dbReference>
<dbReference type="HAMAP" id="MF_00634">
    <property type="entry name" value="UPF0235"/>
    <property type="match status" value="1"/>
</dbReference>
<dbReference type="InterPro" id="IPR003746">
    <property type="entry name" value="DUF167"/>
</dbReference>
<dbReference type="InterPro" id="IPR036591">
    <property type="entry name" value="YggU-like_sf"/>
</dbReference>
<dbReference type="NCBIfam" id="TIGR00251">
    <property type="entry name" value="DUF167 family protein"/>
    <property type="match status" value="1"/>
</dbReference>
<dbReference type="PANTHER" id="PTHR13420">
    <property type="entry name" value="UPF0235 PROTEIN C15ORF40"/>
    <property type="match status" value="1"/>
</dbReference>
<dbReference type="PANTHER" id="PTHR13420:SF7">
    <property type="entry name" value="UPF0235 PROTEIN C15ORF40"/>
    <property type="match status" value="1"/>
</dbReference>
<dbReference type="Pfam" id="PF02594">
    <property type="entry name" value="DUF167"/>
    <property type="match status" value="1"/>
</dbReference>
<dbReference type="SMART" id="SM01152">
    <property type="entry name" value="DUF167"/>
    <property type="match status" value="1"/>
</dbReference>
<dbReference type="SUPFAM" id="SSF69786">
    <property type="entry name" value="YggU-like"/>
    <property type="match status" value="1"/>
</dbReference>
<accession>B4SES7</accession>
<sequence length="97" mass="10462">MIELREKNGSAVFVVKAQPRSSKSRVCGLYNGGLKVNLKAAPVDDAANRECCELFSKLFRIPPSRVHILSGQSSRTKTVMVEGISSKAAALVLEPFG</sequence>
<organism>
    <name type="scientific">Pelodictyon phaeoclathratiforme (strain DSM 5477 / BU-1)</name>
    <dbReference type="NCBI Taxonomy" id="324925"/>
    <lineage>
        <taxon>Bacteria</taxon>
        <taxon>Pseudomonadati</taxon>
        <taxon>Chlorobiota</taxon>
        <taxon>Chlorobiia</taxon>
        <taxon>Chlorobiales</taxon>
        <taxon>Chlorobiaceae</taxon>
        <taxon>Chlorobium/Pelodictyon group</taxon>
        <taxon>Pelodictyon</taxon>
    </lineage>
</organism>
<comment type="similarity">
    <text evidence="1">Belongs to the UPF0235 family.</text>
</comment>
<evidence type="ECO:0000255" key="1">
    <source>
        <dbReference type="HAMAP-Rule" id="MF_00634"/>
    </source>
</evidence>
<proteinExistence type="inferred from homology"/>
<gene>
    <name type="ordered locus">Ppha_2415</name>
</gene>
<name>Y2415_PELPB</name>
<keyword id="KW-1185">Reference proteome</keyword>
<protein>
    <recommendedName>
        <fullName evidence="1">UPF0235 protein Ppha_2415</fullName>
    </recommendedName>
</protein>